<gene>
    <name evidence="1" type="primary">rny</name>
    <name type="ordered locus">LMRG_00851</name>
</gene>
<evidence type="ECO:0000255" key="1">
    <source>
        <dbReference type="HAMAP-Rule" id="MF_00335"/>
    </source>
</evidence>
<evidence type="ECO:0000255" key="2">
    <source>
        <dbReference type="PROSITE-ProRule" id="PRU01175"/>
    </source>
</evidence>
<evidence type="ECO:0000256" key="3">
    <source>
        <dbReference type="SAM" id="MobiDB-lite"/>
    </source>
</evidence>
<comment type="function">
    <text evidence="1">Endoribonuclease that initiates mRNA decay.</text>
</comment>
<comment type="subcellular location">
    <subcellularLocation>
        <location evidence="1">Cell membrane</location>
        <topology evidence="1">Single-pass membrane protein</topology>
    </subcellularLocation>
</comment>
<comment type="similarity">
    <text evidence="1">Belongs to the RNase Y family.</text>
</comment>
<organism>
    <name type="scientific">Listeria monocytogenes serotype 1/2a (strain 10403S)</name>
    <dbReference type="NCBI Taxonomy" id="393133"/>
    <lineage>
        <taxon>Bacteria</taxon>
        <taxon>Bacillati</taxon>
        <taxon>Bacillota</taxon>
        <taxon>Bacilli</taxon>
        <taxon>Bacillales</taxon>
        <taxon>Listeriaceae</taxon>
        <taxon>Listeria</taxon>
    </lineage>
</organism>
<proteinExistence type="inferred from homology"/>
<feature type="chain" id="PRO_0000419035" description="Ribonuclease Y">
    <location>
        <begin position="1"/>
        <end position="520"/>
    </location>
</feature>
<feature type="transmembrane region" description="Helical" evidence="1">
    <location>
        <begin position="5"/>
        <end position="25"/>
    </location>
</feature>
<feature type="domain" description="KH" evidence="1">
    <location>
        <begin position="210"/>
        <end position="273"/>
    </location>
</feature>
<feature type="domain" description="HD" evidence="2">
    <location>
        <begin position="336"/>
        <end position="429"/>
    </location>
</feature>
<feature type="region of interest" description="Disordered" evidence="3">
    <location>
        <begin position="76"/>
        <end position="127"/>
    </location>
</feature>
<dbReference type="EC" id="3.1.-.-" evidence="1"/>
<dbReference type="EMBL" id="AF228345">
    <property type="protein sequence ID" value="AAF34762.1"/>
    <property type="molecule type" value="Genomic_DNA"/>
</dbReference>
<dbReference type="EMBL" id="CP002002">
    <property type="protein sequence ID" value="AEO06384.1"/>
    <property type="molecule type" value="Genomic_DNA"/>
</dbReference>
<dbReference type="RefSeq" id="WP_003721904.1">
    <property type="nucleotide sequence ID" value="NC_017544.1"/>
</dbReference>
<dbReference type="SMR" id="G2JZ15"/>
<dbReference type="GeneID" id="93239276"/>
<dbReference type="KEGG" id="lmt:LMRG_00851"/>
<dbReference type="HOGENOM" id="CLU_028328_1_0_9"/>
<dbReference type="Proteomes" id="UP000001288">
    <property type="component" value="Chromosome"/>
</dbReference>
<dbReference type="GO" id="GO:0005886">
    <property type="term" value="C:plasma membrane"/>
    <property type="evidence" value="ECO:0007669"/>
    <property type="project" value="UniProtKB-SubCell"/>
</dbReference>
<dbReference type="GO" id="GO:0003723">
    <property type="term" value="F:RNA binding"/>
    <property type="evidence" value="ECO:0007669"/>
    <property type="project" value="UniProtKB-UniRule"/>
</dbReference>
<dbReference type="GO" id="GO:0004521">
    <property type="term" value="F:RNA endonuclease activity"/>
    <property type="evidence" value="ECO:0007669"/>
    <property type="project" value="UniProtKB-UniRule"/>
</dbReference>
<dbReference type="GO" id="GO:0006402">
    <property type="term" value="P:mRNA catabolic process"/>
    <property type="evidence" value="ECO:0007669"/>
    <property type="project" value="UniProtKB-UniRule"/>
</dbReference>
<dbReference type="CDD" id="cd00077">
    <property type="entry name" value="HDc"/>
    <property type="match status" value="1"/>
</dbReference>
<dbReference type="CDD" id="cd22431">
    <property type="entry name" value="KH-I_RNaseY"/>
    <property type="match status" value="1"/>
</dbReference>
<dbReference type="FunFam" id="1.10.3210.10:FF:000003">
    <property type="entry name" value="Ribonuclease Y"/>
    <property type="match status" value="1"/>
</dbReference>
<dbReference type="FunFam" id="3.30.1370.10:FF:000006">
    <property type="entry name" value="Ribonuclease Y"/>
    <property type="match status" value="1"/>
</dbReference>
<dbReference type="Gene3D" id="1.10.3210.10">
    <property type="entry name" value="Hypothetical protein af1432"/>
    <property type="match status" value="1"/>
</dbReference>
<dbReference type="Gene3D" id="3.30.1370.10">
    <property type="entry name" value="K Homology domain, type 1"/>
    <property type="match status" value="1"/>
</dbReference>
<dbReference type="HAMAP" id="MF_00335">
    <property type="entry name" value="RNase_Y"/>
    <property type="match status" value="1"/>
</dbReference>
<dbReference type="InterPro" id="IPR003607">
    <property type="entry name" value="HD/PDEase_dom"/>
</dbReference>
<dbReference type="InterPro" id="IPR006674">
    <property type="entry name" value="HD_domain"/>
</dbReference>
<dbReference type="InterPro" id="IPR006675">
    <property type="entry name" value="HDIG_dom"/>
</dbReference>
<dbReference type="InterPro" id="IPR004087">
    <property type="entry name" value="KH_dom"/>
</dbReference>
<dbReference type="InterPro" id="IPR004088">
    <property type="entry name" value="KH_dom_type_1"/>
</dbReference>
<dbReference type="InterPro" id="IPR036612">
    <property type="entry name" value="KH_dom_type_1_sf"/>
</dbReference>
<dbReference type="InterPro" id="IPR017705">
    <property type="entry name" value="Ribonuclease_Y"/>
</dbReference>
<dbReference type="InterPro" id="IPR022711">
    <property type="entry name" value="RNase_Y_N"/>
</dbReference>
<dbReference type="NCBIfam" id="TIGR00277">
    <property type="entry name" value="HDIG"/>
    <property type="match status" value="1"/>
</dbReference>
<dbReference type="NCBIfam" id="TIGR03319">
    <property type="entry name" value="RNase_Y"/>
    <property type="match status" value="1"/>
</dbReference>
<dbReference type="PANTHER" id="PTHR12826">
    <property type="entry name" value="RIBONUCLEASE Y"/>
    <property type="match status" value="1"/>
</dbReference>
<dbReference type="PANTHER" id="PTHR12826:SF15">
    <property type="entry name" value="RIBONUCLEASE Y"/>
    <property type="match status" value="1"/>
</dbReference>
<dbReference type="Pfam" id="PF01966">
    <property type="entry name" value="HD"/>
    <property type="match status" value="1"/>
</dbReference>
<dbReference type="Pfam" id="PF00013">
    <property type="entry name" value="KH_1"/>
    <property type="match status" value="1"/>
</dbReference>
<dbReference type="Pfam" id="PF12072">
    <property type="entry name" value="RNase_Y_N"/>
    <property type="match status" value="1"/>
</dbReference>
<dbReference type="SMART" id="SM00471">
    <property type="entry name" value="HDc"/>
    <property type="match status" value="1"/>
</dbReference>
<dbReference type="SMART" id="SM00322">
    <property type="entry name" value="KH"/>
    <property type="match status" value="1"/>
</dbReference>
<dbReference type="SUPFAM" id="SSF54791">
    <property type="entry name" value="Eukaryotic type KH-domain (KH-domain type I)"/>
    <property type="match status" value="1"/>
</dbReference>
<dbReference type="SUPFAM" id="SSF109604">
    <property type="entry name" value="HD-domain/PDEase-like"/>
    <property type="match status" value="1"/>
</dbReference>
<dbReference type="PROSITE" id="PS51831">
    <property type="entry name" value="HD"/>
    <property type="match status" value="1"/>
</dbReference>
<dbReference type="PROSITE" id="PS50084">
    <property type="entry name" value="KH_TYPE_1"/>
    <property type="match status" value="1"/>
</dbReference>
<sequence>MTIAITIISSLLFLIVGLVVGSLIFKSSTEKKLAAARGTAELIVEDAKKEAETTKKEALLEAKEENHRLRTEIENELRGRRTETQKAENRLLQREENLDRKDTSLSKREATLERKEESISKRQQQIEEKESKLAEMIQAEQTELERISALSKEEAKSIILNQVEEELTHDTAIMVKESENRAKEESDKKAKNILSLAIQRCAADHVAETTVSVVTLPNDEMKGRIIGREGRNIRTLETLTGIDLIIDDTPEAVILSGFDPIRREIARIALEKLVQDGRIHPARIEEMVDKARKEVDEHIREVGEQATFEVGIHSIHPDLIKILGRLRYRTSYGQNVLNHSLEVSKLAGILAGELGEDVTLAKRAGLLHDIGKAIDHEIEGSHVEIGVELATKYKENDVVINSIASHHGDTEATSVIAVLVAAADALSAARPGARSETLENYIRRLEKLEEISESYDGVEKSYAIQAGREVRIIVEPDTIDDLSSYRLARDIRKRIEEELDYPGHIKVTVIRETRAVEYAK</sequence>
<accession>G2JZ15</accession>
<accession>P0A4Q6</accession>
<accession>Q9L738</accession>
<name>RNY_LISM4</name>
<keyword id="KW-1003">Cell membrane</keyword>
<keyword id="KW-0255">Endonuclease</keyword>
<keyword id="KW-0378">Hydrolase</keyword>
<keyword id="KW-0472">Membrane</keyword>
<keyword id="KW-0540">Nuclease</keyword>
<keyword id="KW-0694">RNA-binding</keyword>
<keyword id="KW-0812">Transmembrane</keyword>
<keyword id="KW-1133">Transmembrane helix</keyword>
<reference key="1">
    <citation type="submission" date="2000-01" db="EMBL/GenBank/DDBJ databases">
        <title>Construction and characterization of recA-deficient attenuated mutants of Listeria monocytogenes: cloning and sequence analysis of L. monocytogenes recA gene.</title>
        <authorList>
            <person name="Wang H.W."/>
            <person name="Lee F."/>
            <person name="Yan B.S."/>
            <person name="Shaio M.F."/>
            <person name="Kuo S.C."/>
            <person name="Wang Y.M."/>
            <person name="Yao C.W."/>
        </authorList>
    </citation>
    <scope>NUCLEOTIDE SEQUENCE [GENOMIC DNA]</scope>
    <source>
        <strain>10403S</strain>
    </source>
</reference>
<reference key="2">
    <citation type="submission" date="2010-04" db="EMBL/GenBank/DDBJ databases">
        <title>The genome sequence of Listeria monocytogenes strain 10403S.</title>
        <authorList>
            <consortium name="The Broad Institute Genome Sequencing Platform"/>
            <consortium name="The Broad Institute Genome Sequencing Center for Infectious Disease"/>
            <person name="Borowsky M."/>
            <person name="Borodovsky M."/>
            <person name="Young S.K."/>
            <person name="Zeng Q."/>
            <person name="Koehrsen M."/>
            <person name="Fitzgerald M."/>
            <person name="Wiedmann M."/>
            <person name="Swaminathan B."/>
            <person name="Lauer P."/>
            <person name="Portnoy D."/>
            <person name="Cossart P."/>
            <person name="Buchrieser C."/>
            <person name="Higgins D."/>
            <person name="Abouelleil A."/>
            <person name="Alvarado L."/>
            <person name="Arachchi H.M."/>
            <person name="Berlin A."/>
            <person name="Borenstein D."/>
            <person name="Brown A."/>
            <person name="Chapman S.B."/>
            <person name="Chen Z."/>
            <person name="Dunbar C.D."/>
            <person name="Engels R."/>
            <person name="Freedman E."/>
            <person name="Gearin G."/>
            <person name="Gellesch M."/>
            <person name="Goldberg J."/>
            <person name="Griggs A."/>
            <person name="Gujja S."/>
            <person name="Heilman E."/>
            <person name="Heiman D."/>
            <person name="Howarth C."/>
            <person name="Jen D."/>
            <person name="Larson L."/>
            <person name="Lui A."/>
            <person name="MacDonald J."/>
            <person name="Mehta T."/>
            <person name="Montmayeur A."/>
            <person name="Neiman D."/>
            <person name="Park D."/>
            <person name="Pearson M."/>
            <person name="Priest M."/>
            <person name="Richards J."/>
            <person name="Roberts A."/>
            <person name="Saif S."/>
            <person name="Shea T."/>
            <person name="Shenoy N."/>
            <person name="Sisk P."/>
            <person name="Stolte C."/>
            <person name="Sykes S."/>
            <person name="Walk T."/>
            <person name="White J."/>
            <person name="Yandava C."/>
            <person name="Haas B."/>
            <person name="Nusbaum C."/>
            <person name="Birren B."/>
        </authorList>
    </citation>
    <scope>NUCLEOTIDE SEQUENCE [LARGE SCALE GENOMIC DNA]</scope>
    <source>
        <strain>10403S</strain>
    </source>
</reference>
<protein>
    <recommendedName>
        <fullName evidence="1">Ribonuclease Y</fullName>
        <shortName evidence="1">RNase Y</shortName>
        <ecNumber evidence="1">3.1.-.-</ecNumber>
    </recommendedName>
</protein>